<comment type="function">
    <text evidence="1">Catalyzes the condensation of ATP and 5-phosphoribose 1-diphosphate to form N'-(5'-phosphoribosyl)-ATP (PR-ATP). Has a crucial role in the pathway because the rate of histidine biosynthesis seems to be controlled primarily by regulation of HisG enzymatic activity.</text>
</comment>
<comment type="catalytic activity">
    <reaction evidence="1">
        <text>1-(5-phospho-beta-D-ribosyl)-ATP + diphosphate = 5-phospho-alpha-D-ribose 1-diphosphate + ATP</text>
        <dbReference type="Rhea" id="RHEA:18473"/>
        <dbReference type="ChEBI" id="CHEBI:30616"/>
        <dbReference type="ChEBI" id="CHEBI:33019"/>
        <dbReference type="ChEBI" id="CHEBI:58017"/>
        <dbReference type="ChEBI" id="CHEBI:73183"/>
        <dbReference type="EC" id="2.4.2.17"/>
    </reaction>
</comment>
<comment type="pathway">
    <text evidence="1">Amino-acid biosynthesis; L-histidine biosynthesis; L-histidine from 5-phospho-alpha-D-ribose 1-diphosphate: step 1/9.</text>
</comment>
<comment type="subunit">
    <text evidence="1">Heteromultimer composed of HisG and HisZ subunits.</text>
</comment>
<comment type="subcellular location">
    <subcellularLocation>
        <location evidence="1">Cytoplasm</location>
    </subcellularLocation>
</comment>
<comment type="domain">
    <text>Lacks the C-terminal regulatory region which is replaced by HisZ.</text>
</comment>
<comment type="similarity">
    <text evidence="1">Belongs to the ATP phosphoribosyltransferase family. Short subfamily.</text>
</comment>
<organism>
    <name type="scientific">Brucella abortus (strain 2308)</name>
    <dbReference type="NCBI Taxonomy" id="359391"/>
    <lineage>
        <taxon>Bacteria</taxon>
        <taxon>Pseudomonadati</taxon>
        <taxon>Pseudomonadota</taxon>
        <taxon>Alphaproteobacteria</taxon>
        <taxon>Hyphomicrobiales</taxon>
        <taxon>Brucellaceae</taxon>
        <taxon>Brucella/Ochrobactrum group</taxon>
        <taxon>Brucella</taxon>
    </lineage>
</organism>
<feature type="chain" id="PRO_0000229308" description="ATP phosphoribosyltransferase">
    <location>
        <begin position="1"/>
        <end position="231"/>
    </location>
</feature>
<protein>
    <recommendedName>
        <fullName evidence="1">ATP phosphoribosyltransferase</fullName>
        <shortName evidence="1">ATP-PRT</shortName>
        <shortName evidence="1">ATP-PRTase</shortName>
        <ecNumber evidence="1">2.4.2.17</ecNumber>
    </recommendedName>
</protein>
<proteinExistence type="inferred from homology"/>
<sequence length="231" mass="25469">MSVTLALPSKGRLKEKTLAVLEKAGYKVVLPDDDRNYRARVEGEDDLDILFLSASEIARELGYGSVDLGVTGEDLVRETLAHADERVAIEAQLGFGHADVVVAVPEVWRDVTTMADLDDVAADFRQRHGRRLRIATKYWRLTQQFFSQKHGIQVYRIVESLGATEGAPAAGSADMIVDITSTGSTLRANRLKVLEDGIILRSQACLVSARRSHTSRRVEEIAARIRAGLEI</sequence>
<evidence type="ECO:0000255" key="1">
    <source>
        <dbReference type="HAMAP-Rule" id="MF_01018"/>
    </source>
</evidence>
<keyword id="KW-0028">Amino-acid biosynthesis</keyword>
<keyword id="KW-0067">ATP-binding</keyword>
<keyword id="KW-0963">Cytoplasm</keyword>
<keyword id="KW-0328">Glycosyltransferase</keyword>
<keyword id="KW-0368">Histidine biosynthesis</keyword>
<keyword id="KW-0547">Nucleotide-binding</keyword>
<keyword id="KW-1185">Reference proteome</keyword>
<keyword id="KW-0808">Transferase</keyword>
<gene>
    <name evidence="1" type="primary">hisG</name>
    <name type="ordered locus">BAB2_0183</name>
</gene>
<name>HIS1_BRUA2</name>
<reference key="1">
    <citation type="journal article" date="2005" name="Infect. Immun.">
        <title>Whole-genome analyses of speciation events in pathogenic Brucellae.</title>
        <authorList>
            <person name="Chain P.S."/>
            <person name="Comerci D.J."/>
            <person name="Tolmasky M.E."/>
            <person name="Larimer F.W."/>
            <person name="Malfatti S.A."/>
            <person name="Vergez L.M."/>
            <person name="Aguero F."/>
            <person name="Land M.L."/>
            <person name="Ugalde R.A."/>
            <person name="Garcia E."/>
        </authorList>
    </citation>
    <scope>NUCLEOTIDE SEQUENCE [LARGE SCALE GENOMIC DNA]</scope>
    <source>
        <strain>2308</strain>
    </source>
</reference>
<dbReference type="EC" id="2.4.2.17" evidence="1"/>
<dbReference type="EMBL" id="AM040265">
    <property type="protein sequence ID" value="CAJ12349.1"/>
    <property type="molecule type" value="Genomic_DNA"/>
</dbReference>
<dbReference type="RefSeq" id="WP_002966393.1">
    <property type="nucleotide sequence ID" value="NZ_KN046823.1"/>
</dbReference>
<dbReference type="SMR" id="Q2YIJ9"/>
<dbReference type="STRING" id="359391.BAB2_0183"/>
<dbReference type="GeneID" id="93015854"/>
<dbReference type="KEGG" id="bmf:BAB2_0183"/>
<dbReference type="PATRIC" id="fig|359391.11.peg.2133"/>
<dbReference type="HOGENOM" id="CLU_038115_0_1_5"/>
<dbReference type="PhylomeDB" id="Q2YIJ9"/>
<dbReference type="UniPathway" id="UPA00031">
    <property type="reaction ID" value="UER00006"/>
</dbReference>
<dbReference type="Proteomes" id="UP000002719">
    <property type="component" value="Chromosome II"/>
</dbReference>
<dbReference type="GO" id="GO:0005737">
    <property type="term" value="C:cytoplasm"/>
    <property type="evidence" value="ECO:0007669"/>
    <property type="project" value="UniProtKB-SubCell"/>
</dbReference>
<dbReference type="GO" id="GO:0005524">
    <property type="term" value="F:ATP binding"/>
    <property type="evidence" value="ECO:0007669"/>
    <property type="project" value="UniProtKB-KW"/>
</dbReference>
<dbReference type="GO" id="GO:0003879">
    <property type="term" value="F:ATP phosphoribosyltransferase activity"/>
    <property type="evidence" value="ECO:0007669"/>
    <property type="project" value="UniProtKB-UniRule"/>
</dbReference>
<dbReference type="GO" id="GO:0000105">
    <property type="term" value="P:L-histidine biosynthetic process"/>
    <property type="evidence" value="ECO:0007669"/>
    <property type="project" value="UniProtKB-UniRule"/>
</dbReference>
<dbReference type="CDD" id="cd13593">
    <property type="entry name" value="PBP2_HisGL3"/>
    <property type="match status" value="1"/>
</dbReference>
<dbReference type="Gene3D" id="3.40.190.10">
    <property type="entry name" value="Periplasmic binding protein-like II"/>
    <property type="match status" value="2"/>
</dbReference>
<dbReference type="HAMAP" id="MF_01018">
    <property type="entry name" value="HisG_Short"/>
    <property type="match status" value="1"/>
</dbReference>
<dbReference type="InterPro" id="IPR013820">
    <property type="entry name" value="ATP_PRibTrfase_cat"/>
</dbReference>
<dbReference type="InterPro" id="IPR018198">
    <property type="entry name" value="ATP_PRibTrfase_CS"/>
</dbReference>
<dbReference type="InterPro" id="IPR001348">
    <property type="entry name" value="ATP_PRibTrfase_HisG"/>
</dbReference>
<dbReference type="InterPro" id="IPR024893">
    <property type="entry name" value="ATP_PRibTrfase_HisG_short"/>
</dbReference>
<dbReference type="NCBIfam" id="TIGR00070">
    <property type="entry name" value="hisG"/>
    <property type="match status" value="1"/>
</dbReference>
<dbReference type="PANTHER" id="PTHR21403:SF8">
    <property type="entry name" value="ATP PHOSPHORIBOSYLTRANSFERASE"/>
    <property type="match status" value="1"/>
</dbReference>
<dbReference type="PANTHER" id="PTHR21403">
    <property type="entry name" value="ATP PHOSPHORIBOSYLTRANSFERASE ATP-PRTASE"/>
    <property type="match status" value="1"/>
</dbReference>
<dbReference type="Pfam" id="PF01634">
    <property type="entry name" value="HisG"/>
    <property type="match status" value="1"/>
</dbReference>
<dbReference type="SUPFAM" id="SSF53850">
    <property type="entry name" value="Periplasmic binding protein-like II"/>
    <property type="match status" value="1"/>
</dbReference>
<dbReference type="PROSITE" id="PS01316">
    <property type="entry name" value="ATP_P_PHORIBOSYLTR"/>
    <property type="match status" value="1"/>
</dbReference>
<accession>Q2YIJ9</accession>